<protein>
    <recommendedName>
        <fullName evidence="1">Enolase</fullName>
        <ecNumber evidence="1">4.2.1.11</ecNumber>
    </recommendedName>
    <alternativeName>
        <fullName evidence="1">2-phospho-D-glycerate hydro-lyase</fullName>
    </alternativeName>
    <alternativeName>
        <fullName evidence="1">2-phosphoglycerate dehydratase</fullName>
    </alternativeName>
</protein>
<feature type="chain" id="PRO_1000119564" description="Enolase">
    <location>
        <begin position="1"/>
        <end position="431"/>
    </location>
</feature>
<feature type="active site" description="Proton donor" evidence="1">
    <location>
        <position position="205"/>
    </location>
</feature>
<feature type="active site" description="Proton acceptor" evidence="1">
    <location>
        <position position="340"/>
    </location>
</feature>
<feature type="binding site" evidence="1">
    <location>
        <position position="163"/>
    </location>
    <ligand>
        <name>(2R)-2-phosphoglycerate</name>
        <dbReference type="ChEBI" id="CHEBI:58289"/>
    </ligand>
</feature>
<feature type="binding site" evidence="1">
    <location>
        <position position="242"/>
    </location>
    <ligand>
        <name>Mg(2+)</name>
        <dbReference type="ChEBI" id="CHEBI:18420"/>
    </ligand>
</feature>
<feature type="binding site" evidence="1">
    <location>
        <position position="288"/>
    </location>
    <ligand>
        <name>Mg(2+)</name>
        <dbReference type="ChEBI" id="CHEBI:18420"/>
    </ligand>
</feature>
<feature type="binding site" evidence="1">
    <location>
        <position position="315"/>
    </location>
    <ligand>
        <name>Mg(2+)</name>
        <dbReference type="ChEBI" id="CHEBI:18420"/>
    </ligand>
</feature>
<feature type="binding site" evidence="1">
    <location>
        <position position="340"/>
    </location>
    <ligand>
        <name>(2R)-2-phosphoglycerate</name>
        <dbReference type="ChEBI" id="CHEBI:58289"/>
    </ligand>
</feature>
<feature type="binding site" evidence="1">
    <location>
        <position position="369"/>
    </location>
    <ligand>
        <name>(2R)-2-phosphoglycerate</name>
        <dbReference type="ChEBI" id="CHEBI:58289"/>
    </ligand>
</feature>
<feature type="binding site" evidence="1">
    <location>
        <position position="370"/>
    </location>
    <ligand>
        <name>(2R)-2-phosphoglycerate</name>
        <dbReference type="ChEBI" id="CHEBI:58289"/>
    </ligand>
</feature>
<feature type="binding site" evidence="1">
    <location>
        <position position="391"/>
    </location>
    <ligand>
        <name>(2R)-2-phosphoglycerate</name>
        <dbReference type="ChEBI" id="CHEBI:58289"/>
    </ligand>
</feature>
<keyword id="KW-0963">Cytoplasm</keyword>
<keyword id="KW-0324">Glycolysis</keyword>
<keyword id="KW-0456">Lyase</keyword>
<keyword id="KW-0460">Magnesium</keyword>
<keyword id="KW-0479">Metal-binding</keyword>
<keyword id="KW-0964">Secreted</keyword>
<sequence>MSTIIDVYAREVLDSRGNPTVEVEVYTESGAFGRAIVPSGASTGEHEAVELRDGDKSRYLGKGVVNAVNNVNEIIAPEIAGFDVTDQAGIDRAMIELDGTPNKGKLGANAILGVSMAVAHAAADFVGLPLYRYLGGFNAKQLPTPMMNIINGGSHADNNVDFQEFMILPVGAPTFKESIRMGAEVFHALKAVLHDKGLNTAVGDEGGFAPNLGSNREALEVIIEAIEKAGYKAGENVFLGMDVASSEFYNKETGKYDLAGEGRTGLTSAEMVDFYEELCKDFPIISIEDGLDENDWDGHKLLTERIGDKVQLVGDDLFVTNTQKLAEGIEKGISNSILIKVNQIGTLTETFEAIEMAKRAGYTAVVSHRSGETEDATIADIAVATNAGQIKTGSMSRTDRIAKYNQLLRIEDELGEIAVYDGIKSFYNIKR</sequence>
<gene>
    <name evidence="1" type="primary">eno</name>
    <name type="ordered locus">BCG9842_B5703</name>
</gene>
<name>ENO_BACC2</name>
<accession>B7IP20</accession>
<organism>
    <name type="scientific">Bacillus cereus (strain G9842)</name>
    <dbReference type="NCBI Taxonomy" id="405531"/>
    <lineage>
        <taxon>Bacteria</taxon>
        <taxon>Bacillati</taxon>
        <taxon>Bacillota</taxon>
        <taxon>Bacilli</taxon>
        <taxon>Bacillales</taxon>
        <taxon>Bacillaceae</taxon>
        <taxon>Bacillus</taxon>
        <taxon>Bacillus cereus group</taxon>
    </lineage>
</organism>
<comment type="function">
    <text evidence="1">Catalyzes the reversible conversion of 2-phosphoglycerate (2-PG) into phosphoenolpyruvate (PEP). It is essential for the degradation of carbohydrates via glycolysis.</text>
</comment>
<comment type="catalytic activity">
    <reaction evidence="1">
        <text>(2R)-2-phosphoglycerate = phosphoenolpyruvate + H2O</text>
        <dbReference type="Rhea" id="RHEA:10164"/>
        <dbReference type="ChEBI" id="CHEBI:15377"/>
        <dbReference type="ChEBI" id="CHEBI:58289"/>
        <dbReference type="ChEBI" id="CHEBI:58702"/>
        <dbReference type="EC" id="4.2.1.11"/>
    </reaction>
</comment>
<comment type="cofactor">
    <cofactor evidence="1">
        <name>Mg(2+)</name>
        <dbReference type="ChEBI" id="CHEBI:18420"/>
    </cofactor>
    <text evidence="1">Binds a second Mg(2+) ion via substrate during catalysis.</text>
</comment>
<comment type="pathway">
    <text evidence="1">Carbohydrate degradation; glycolysis; pyruvate from D-glyceraldehyde 3-phosphate: step 4/5.</text>
</comment>
<comment type="subcellular location">
    <subcellularLocation>
        <location evidence="1">Cytoplasm</location>
    </subcellularLocation>
    <subcellularLocation>
        <location evidence="1">Secreted</location>
    </subcellularLocation>
    <subcellularLocation>
        <location evidence="1">Cell surface</location>
    </subcellularLocation>
    <text evidence="1">Fractions of enolase are present in both the cytoplasm and on the cell surface.</text>
</comment>
<comment type="similarity">
    <text evidence="1">Belongs to the enolase family.</text>
</comment>
<proteinExistence type="inferred from homology"/>
<evidence type="ECO:0000255" key="1">
    <source>
        <dbReference type="HAMAP-Rule" id="MF_00318"/>
    </source>
</evidence>
<dbReference type="EC" id="4.2.1.11" evidence="1"/>
<dbReference type="EMBL" id="CP001186">
    <property type="protein sequence ID" value="ACK94460.1"/>
    <property type="molecule type" value="Genomic_DNA"/>
</dbReference>
<dbReference type="RefSeq" id="WP_000103951.1">
    <property type="nucleotide sequence ID" value="NC_011772.1"/>
</dbReference>
<dbReference type="SMR" id="B7IP20"/>
<dbReference type="GeneID" id="72451774"/>
<dbReference type="KEGG" id="bcg:BCG9842_B5703"/>
<dbReference type="HOGENOM" id="CLU_031223_2_1_9"/>
<dbReference type="UniPathway" id="UPA00109">
    <property type="reaction ID" value="UER00187"/>
</dbReference>
<dbReference type="Proteomes" id="UP000006744">
    <property type="component" value="Chromosome"/>
</dbReference>
<dbReference type="GO" id="GO:0009986">
    <property type="term" value="C:cell surface"/>
    <property type="evidence" value="ECO:0007669"/>
    <property type="project" value="UniProtKB-SubCell"/>
</dbReference>
<dbReference type="GO" id="GO:0005576">
    <property type="term" value="C:extracellular region"/>
    <property type="evidence" value="ECO:0007669"/>
    <property type="project" value="UniProtKB-SubCell"/>
</dbReference>
<dbReference type="GO" id="GO:0000015">
    <property type="term" value="C:phosphopyruvate hydratase complex"/>
    <property type="evidence" value="ECO:0007669"/>
    <property type="project" value="InterPro"/>
</dbReference>
<dbReference type="GO" id="GO:0000287">
    <property type="term" value="F:magnesium ion binding"/>
    <property type="evidence" value="ECO:0007669"/>
    <property type="project" value="UniProtKB-UniRule"/>
</dbReference>
<dbReference type="GO" id="GO:0004634">
    <property type="term" value="F:phosphopyruvate hydratase activity"/>
    <property type="evidence" value="ECO:0007669"/>
    <property type="project" value="UniProtKB-UniRule"/>
</dbReference>
<dbReference type="GO" id="GO:0006096">
    <property type="term" value="P:glycolytic process"/>
    <property type="evidence" value="ECO:0007669"/>
    <property type="project" value="UniProtKB-UniRule"/>
</dbReference>
<dbReference type="CDD" id="cd03313">
    <property type="entry name" value="enolase"/>
    <property type="match status" value="1"/>
</dbReference>
<dbReference type="FunFam" id="3.20.20.120:FF:000001">
    <property type="entry name" value="Enolase"/>
    <property type="match status" value="1"/>
</dbReference>
<dbReference type="FunFam" id="3.30.390.10:FF:000001">
    <property type="entry name" value="Enolase"/>
    <property type="match status" value="1"/>
</dbReference>
<dbReference type="Gene3D" id="3.20.20.120">
    <property type="entry name" value="Enolase-like C-terminal domain"/>
    <property type="match status" value="1"/>
</dbReference>
<dbReference type="Gene3D" id="3.30.390.10">
    <property type="entry name" value="Enolase-like, N-terminal domain"/>
    <property type="match status" value="1"/>
</dbReference>
<dbReference type="HAMAP" id="MF_00318">
    <property type="entry name" value="Enolase"/>
    <property type="match status" value="1"/>
</dbReference>
<dbReference type="InterPro" id="IPR000941">
    <property type="entry name" value="Enolase"/>
</dbReference>
<dbReference type="InterPro" id="IPR036849">
    <property type="entry name" value="Enolase-like_C_sf"/>
</dbReference>
<dbReference type="InterPro" id="IPR029017">
    <property type="entry name" value="Enolase-like_N"/>
</dbReference>
<dbReference type="InterPro" id="IPR020810">
    <property type="entry name" value="Enolase_C"/>
</dbReference>
<dbReference type="InterPro" id="IPR020809">
    <property type="entry name" value="Enolase_CS"/>
</dbReference>
<dbReference type="InterPro" id="IPR020811">
    <property type="entry name" value="Enolase_N"/>
</dbReference>
<dbReference type="NCBIfam" id="TIGR01060">
    <property type="entry name" value="eno"/>
    <property type="match status" value="1"/>
</dbReference>
<dbReference type="PANTHER" id="PTHR11902">
    <property type="entry name" value="ENOLASE"/>
    <property type="match status" value="1"/>
</dbReference>
<dbReference type="PANTHER" id="PTHR11902:SF1">
    <property type="entry name" value="ENOLASE"/>
    <property type="match status" value="1"/>
</dbReference>
<dbReference type="Pfam" id="PF00113">
    <property type="entry name" value="Enolase_C"/>
    <property type="match status" value="1"/>
</dbReference>
<dbReference type="Pfam" id="PF03952">
    <property type="entry name" value="Enolase_N"/>
    <property type="match status" value="1"/>
</dbReference>
<dbReference type="PIRSF" id="PIRSF001400">
    <property type="entry name" value="Enolase"/>
    <property type="match status" value="1"/>
</dbReference>
<dbReference type="PRINTS" id="PR00148">
    <property type="entry name" value="ENOLASE"/>
</dbReference>
<dbReference type="SFLD" id="SFLDS00001">
    <property type="entry name" value="Enolase"/>
    <property type="match status" value="1"/>
</dbReference>
<dbReference type="SFLD" id="SFLDF00002">
    <property type="entry name" value="enolase"/>
    <property type="match status" value="1"/>
</dbReference>
<dbReference type="SMART" id="SM01192">
    <property type="entry name" value="Enolase_C"/>
    <property type="match status" value="1"/>
</dbReference>
<dbReference type="SMART" id="SM01193">
    <property type="entry name" value="Enolase_N"/>
    <property type="match status" value="1"/>
</dbReference>
<dbReference type="SUPFAM" id="SSF51604">
    <property type="entry name" value="Enolase C-terminal domain-like"/>
    <property type="match status" value="1"/>
</dbReference>
<dbReference type="SUPFAM" id="SSF54826">
    <property type="entry name" value="Enolase N-terminal domain-like"/>
    <property type="match status" value="1"/>
</dbReference>
<dbReference type="PROSITE" id="PS00164">
    <property type="entry name" value="ENOLASE"/>
    <property type="match status" value="1"/>
</dbReference>
<reference key="1">
    <citation type="submission" date="2008-10" db="EMBL/GenBank/DDBJ databases">
        <title>Genome sequence of Bacillus cereus G9842.</title>
        <authorList>
            <person name="Dodson R.J."/>
            <person name="Durkin A.S."/>
            <person name="Rosovitz M.J."/>
            <person name="Rasko D.A."/>
            <person name="Hoffmaster A."/>
            <person name="Ravel J."/>
            <person name="Sutton G."/>
        </authorList>
    </citation>
    <scope>NUCLEOTIDE SEQUENCE [LARGE SCALE GENOMIC DNA]</scope>
    <source>
        <strain>G9842</strain>
    </source>
</reference>